<accession>Q5U4E6</accession>
<feature type="chain" id="PRO_0000413421" description="Golgin subfamily A member 4">
    <location>
        <begin position="1"/>
        <end position="2259"/>
    </location>
</feature>
<feature type="domain" description="GRIP" evidence="5">
    <location>
        <begin position="2199"/>
        <end position="2246"/>
    </location>
</feature>
<feature type="region of interest" description="Disordered" evidence="6">
    <location>
        <begin position="1"/>
        <end position="54"/>
    </location>
</feature>
<feature type="region of interest" description="Interaction with MACF1" evidence="1">
    <location>
        <begin position="165"/>
        <end position="235"/>
    </location>
</feature>
<feature type="region of interest" description="Disordered" evidence="6">
    <location>
        <begin position="1932"/>
        <end position="1977"/>
    </location>
</feature>
<feature type="coiled-coil region" evidence="4">
    <location>
        <begin position="167"/>
        <end position="2182"/>
    </location>
</feature>
<feature type="compositionally biased region" description="Low complexity" evidence="6">
    <location>
        <begin position="12"/>
        <end position="41"/>
    </location>
</feature>
<feature type="compositionally biased region" description="Basic and acidic residues" evidence="6">
    <location>
        <begin position="1932"/>
        <end position="1946"/>
    </location>
</feature>
<feature type="compositionally biased region" description="Basic and acidic residues" evidence="6">
    <location>
        <begin position="1954"/>
        <end position="1977"/>
    </location>
</feature>
<feature type="modified residue" description="Phosphoserine" evidence="2">
    <location>
        <position position="10"/>
    </location>
</feature>
<feature type="modified residue" description="Phosphothreonine" evidence="3">
    <location>
        <position position="39"/>
    </location>
</feature>
<feature type="modified residue" description="Phosphoserine" evidence="2">
    <location>
        <position position="41"/>
    </location>
</feature>
<feature type="modified residue" description="Phosphoserine" evidence="12">
    <location>
        <position position="104"/>
    </location>
</feature>
<feature type="modified residue" description="Phosphoserine" evidence="2">
    <location>
        <position position="111"/>
    </location>
</feature>
<keyword id="KW-0175">Coiled coil</keyword>
<keyword id="KW-0963">Cytoplasm</keyword>
<keyword id="KW-0333">Golgi apparatus</keyword>
<keyword id="KW-0472">Membrane</keyword>
<keyword id="KW-0597">Phosphoprotein</keyword>
<keyword id="KW-1185">Reference proteome</keyword>
<sequence length="2259" mass="260191">MFKKLKQKISEEQQQLQQALAPAQASSSSSTPTRTRSRTSSFTDQLDDATPNRELLAGMVAEPAFLSEYTIFALDPSKQPKTQTGSVSGDTQTFAQKLQLRVPSMESLFRSPIKESLFRSSKESLVRTSSRESLNQVDLDCAVATFDPPSDMESEAEDAPWSSDSLSREQLLQRLRRMERSLSSYRGKYSELVTAFQTLQREKKKLQGILSQSQDKSLRRISELREELQMDQQAKRHLQEEFDACVEEKDQYISVLQTQVSLLKQRLQNGPMSVDVPKPLPPVELQAEAHSDMEKLEEKLEEKLEEKLEEKLEGVGEAVGGGTSAKTLEMLQQRVKRQENLLQRCKETIGSHKEQCALLLSEKEALQEQLEERLQELEKMKELHMAEKTKLITQLRDAKNLIEQLEQDKGMVITEAKRQMLETLELKDDEIAQLRSHIQRMTTQGEELREQKEKSERAAFEELEKALSTAQKTEDAQRRMKVEMDEQIKAVERAGEEERLRLQHELSRVRQEAVSMAKKNSEQRADLQKLHAEQLASKEQELSQKLESRERELQEQMRMALEKSRSEYLKLTQEKEQQESLALEELELQKKAILTESENKLQGLRQEAEVHRTRIRELETSLEKSLQESRTQSERLAVHLEAEKSKHKTELTALAEKHRTELEGLQQQQHSLWTERLQNLSQQHQAAVEELREKHQQEKDALLKEKESLFQAHIQDMNEKTLEKLDKKQMELESVSSELSEALKARDQLAEELSVLRGDADQMKQALEAELQEQRRHHQREVDSISGQQEIIVRRTEKALKDEISQLGGLLKEKDEHLQERQAQVHNLEACLQKSAEELQQALAKLDLLQAQQSTTHAQTGAYEEQLAQMQQKVSDLETEKNLLTKQVVEVETQKKRVCVELDAQRAQVQQLERQRSELEDKVKSLAQLQESQLKNSHVEKEQAQQILTEKENVILQMREEQAKEIEILKQKLFSKEESISILHEEYETKFKNQEKRMEKIKQKAKEMQEMKKKLLDQEAKLKKELENTVLELSQKEKQFNAKILEMAQANSAGISDTVSRLEENQRQQIESLTGAHQRELDDLIESWEKKLSQQAEELRDQHEKLIEEKEQELGELKQKVLTVQSEKEEVTQEVARLTEAVTGQDVTLAGLQGQLEQKSAAVLALSDSHAQLQSQVEKLEVDLGCALNEKLSLQEELAELKMLAEREKLRVSELTGKVQAAEEELQSCKSLHEVSRKSLEDKSLNLRTLLEELASQLDRHCERTKALLEAKTNELVCTSRDKADAILARLSRCQRHTATVGEALLRRMGQVSELEAQLTQLTEEQCTLKNSFQQVTNQLEEKENQIKTMKADMEGLIAEKEALQQEGGQQQQVASEKESCITQLKKELSENINAVTLLREELSEKKSEIASLSKQLSDVSAQLENSISPSDKAEAISALSKQHEEQELQLQAQLRELSSKVDALSKEKMSALEQVDHWSNKFSEWKKKAQPRFAQYQSTIKDLQTQLDLKAKEAGEKDEQIRLLKEDLDQQNERFESLKGEMEKKECDLETELKTRTARVVELEDCITQRKKEVESLNEALRNCSQQRDTEHSGLVQTLQRLEELGQEKDNKVREAEETVLGLRERVSSLEAELRVVRKELDDVNSSVKSRDGELKALEDKLELESAAKVELKRKAEQKLAAIRKQLLSQMEAKVQQCAKDTESQLSELRAKLQGREKQIHILEGKLKNLASSPHPERAVVSGSMGNVAASPEQEAADSQECTQKACKERVCVLQRSVIEKERLTQRLQQGEREAAPSQSEVRHRELSVKLDRARAKQLEDQVLIGCLQEELEERMKCPSILSQPMGEETGKNNTGLKQNWASMVDTVQKTLQEKELSCQALERRVRELESDLITERDAHRLEVEKLTLKYEKSQSPQQEMGGKNTSVEILEDRPEENSKSHVIESKLGTPMDGRHSDLESKLAGSEREKQKLSKEVGRLQKDLRALRKEHQQELDILRKECEQEAEEKLKQEQEDLELKHSSTLKQLMREFNTQLAQKEQELERTVQETIDKAQEVEAELLQSHQEETQQLHRKIAEKEDDLQRTARRYEEILDAREEEMTAKVMDLQTRLEELQKKYEHRLEQEESAKDSVTVLELQTQLAQKTTLISDSKLKEQELREQVHNLEDRLKSYEKSVCAAAVGAPYRGGNLYHTEVSLFGEPTEFEYLRKVLFEYMMGRETKTMAKVITTVLRFPDDQAQKILEREDARLMSWLRTSS</sequence>
<evidence type="ECO:0000250" key="1"/>
<evidence type="ECO:0000250" key="2">
    <source>
        <dbReference type="UniProtKB" id="Q13439"/>
    </source>
</evidence>
<evidence type="ECO:0000250" key="3">
    <source>
        <dbReference type="UniProtKB" id="Q91VW5"/>
    </source>
</evidence>
<evidence type="ECO:0000255" key="4"/>
<evidence type="ECO:0000255" key="5">
    <source>
        <dbReference type="PROSITE-ProRule" id="PRU00250"/>
    </source>
</evidence>
<evidence type="ECO:0000256" key="6">
    <source>
        <dbReference type="SAM" id="MobiDB-lite"/>
    </source>
</evidence>
<evidence type="ECO:0000269" key="7">
    <source>
    </source>
</evidence>
<evidence type="ECO:0000269" key="8">
    <source>
    </source>
</evidence>
<evidence type="ECO:0000305" key="9"/>
<evidence type="ECO:0000312" key="10">
    <source>
        <dbReference type="EMBL" id="AAH85124.1"/>
    </source>
</evidence>
<evidence type="ECO:0000312" key="11">
    <source>
        <dbReference type="RGD" id="1591925"/>
    </source>
</evidence>
<evidence type="ECO:0007744" key="12">
    <source>
    </source>
</evidence>
<organism>
    <name type="scientific">Rattus norvegicus</name>
    <name type="common">Rat</name>
    <dbReference type="NCBI Taxonomy" id="10116"/>
    <lineage>
        <taxon>Eukaryota</taxon>
        <taxon>Metazoa</taxon>
        <taxon>Chordata</taxon>
        <taxon>Craniata</taxon>
        <taxon>Vertebrata</taxon>
        <taxon>Euteleostomi</taxon>
        <taxon>Mammalia</taxon>
        <taxon>Eutheria</taxon>
        <taxon>Euarchontoglires</taxon>
        <taxon>Glires</taxon>
        <taxon>Rodentia</taxon>
        <taxon>Myomorpha</taxon>
        <taxon>Muroidea</taxon>
        <taxon>Muridae</taxon>
        <taxon>Murinae</taxon>
        <taxon>Rattus</taxon>
    </lineage>
</organism>
<proteinExistence type="evidence at protein level"/>
<name>GOGA4_RAT</name>
<dbReference type="EMBL" id="BC085124">
    <property type="protein sequence ID" value="AAH85124.1"/>
    <property type="molecule type" value="mRNA"/>
</dbReference>
<dbReference type="SMR" id="Q5U4E6"/>
<dbReference type="FunCoup" id="Q5U4E6">
    <property type="interactions" value="1409"/>
</dbReference>
<dbReference type="STRING" id="10116.ENSRNOP00000069066"/>
<dbReference type="CarbonylDB" id="Q5U4E6"/>
<dbReference type="iPTMnet" id="Q5U4E6"/>
<dbReference type="PhosphoSitePlus" id="Q5U4E6"/>
<dbReference type="jPOST" id="Q5U4E6"/>
<dbReference type="PaxDb" id="10116-ENSRNOP00000039533"/>
<dbReference type="PeptideAtlas" id="Q5U4E6"/>
<dbReference type="UCSC" id="RGD:1591925">
    <property type="organism name" value="rat"/>
</dbReference>
<dbReference type="AGR" id="RGD:1591925"/>
<dbReference type="RGD" id="1591925">
    <property type="gene designation" value="Golga4"/>
</dbReference>
<dbReference type="eggNOG" id="ENOG502QTM0">
    <property type="taxonomic scope" value="Eukaryota"/>
</dbReference>
<dbReference type="InParanoid" id="Q5U4E6"/>
<dbReference type="Reactome" id="R-RNO-6811440">
    <property type="pathway name" value="Retrograde transport at the Trans-Golgi-Network"/>
</dbReference>
<dbReference type="PRO" id="PR:Q5U4E6"/>
<dbReference type="Proteomes" id="UP000002494">
    <property type="component" value="Chromosome 8"/>
</dbReference>
<dbReference type="Bgee" id="ENSRNOG00000029910">
    <property type="expression patterns" value="Expressed in skeletal muscle tissue and 19 other cell types or tissues"/>
</dbReference>
<dbReference type="ExpressionAtlas" id="Q5U4E6">
    <property type="expression patterns" value="baseline and differential"/>
</dbReference>
<dbReference type="GO" id="GO:0005737">
    <property type="term" value="C:cytoplasm"/>
    <property type="evidence" value="ECO:0000266"/>
    <property type="project" value="RGD"/>
</dbReference>
<dbReference type="GO" id="GO:0005794">
    <property type="term" value="C:Golgi apparatus"/>
    <property type="evidence" value="ECO:0000266"/>
    <property type="project" value="RGD"/>
</dbReference>
<dbReference type="GO" id="GO:0000139">
    <property type="term" value="C:Golgi membrane"/>
    <property type="evidence" value="ECO:0007669"/>
    <property type="project" value="UniProtKB-SubCell"/>
</dbReference>
<dbReference type="GO" id="GO:0051020">
    <property type="term" value="F:GTPase binding"/>
    <property type="evidence" value="ECO:0000266"/>
    <property type="project" value="RGD"/>
</dbReference>
<dbReference type="GO" id="GO:0031267">
    <property type="term" value="F:small GTPase binding"/>
    <property type="evidence" value="ECO:0000318"/>
    <property type="project" value="GO_Central"/>
</dbReference>
<dbReference type="GO" id="GO:0043001">
    <property type="term" value="P:Golgi to plasma membrane protein transport"/>
    <property type="evidence" value="ECO:0000266"/>
    <property type="project" value="RGD"/>
</dbReference>
<dbReference type="GO" id="GO:0048193">
    <property type="term" value="P:Golgi vesicle transport"/>
    <property type="evidence" value="ECO:0000318"/>
    <property type="project" value="GO_Central"/>
</dbReference>
<dbReference type="GO" id="GO:0045773">
    <property type="term" value="P:positive regulation of axon extension"/>
    <property type="evidence" value="ECO:0000266"/>
    <property type="project" value="RGD"/>
</dbReference>
<dbReference type="Gene3D" id="1.10.220.60">
    <property type="entry name" value="GRIP domain"/>
    <property type="match status" value="1"/>
</dbReference>
<dbReference type="InterPro" id="IPR000237">
    <property type="entry name" value="GRIP_dom"/>
</dbReference>
<dbReference type="PANTHER" id="PTHR19327">
    <property type="entry name" value="GOLGIN"/>
    <property type="match status" value="1"/>
</dbReference>
<dbReference type="PANTHER" id="PTHR19327:SF0">
    <property type="entry name" value="GOLGIN SUBFAMILY A MEMBER 4"/>
    <property type="match status" value="1"/>
</dbReference>
<dbReference type="Pfam" id="PF01465">
    <property type="entry name" value="GRIP"/>
    <property type="match status" value="1"/>
</dbReference>
<dbReference type="SMART" id="SM00755">
    <property type="entry name" value="Grip"/>
    <property type="match status" value="1"/>
</dbReference>
<dbReference type="SUPFAM" id="SSF101283">
    <property type="entry name" value="GRIP domain"/>
    <property type="match status" value="1"/>
</dbReference>
<dbReference type="PROSITE" id="PS50913">
    <property type="entry name" value="GRIP"/>
    <property type="match status" value="1"/>
</dbReference>
<comment type="function">
    <text evidence="2">Involved in vesicular trafficking at the Golgi apparatus level. May play a role in delivery of transport vesicles containing GPI-linked proteins from the trans-Golgi network through its interaction with MACF1. Involved in endosome-to-Golgi trafficking.</text>
</comment>
<comment type="subunit">
    <text evidence="2">Homodimer. Interacts with GTP-bound ARL1 and ARL3. Interacts with MACF1. Directly interacts with TBC1D23. Interacts with FAM91A1; this interaction may be mediated by TBC1D23.</text>
</comment>
<comment type="subcellular location">
    <subcellularLocation>
        <location evidence="2">Cytoplasm</location>
    </subcellularLocation>
    <subcellularLocation>
        <location evidence="2">Golgi apparatus membrane</location>
        <topology evidence="2">Peripheral membrane protein</topology>
    </subcellularLocation>
    <subcellularLocation>
        <location evidence="2">Golgi apparatus</location>
        <location evidence="2">trans-Golgi network membrane</location>
    </subcellularLocation>
</comment>
<comment type="tissue specificity">
    <text evidence="8">Expressed in the head of epididymal sperm but not in testicular sperm (at protein level).</text>
</comment>
<comment type="domain">
    <text evidence="2">Extended rod-like protein with coiled-coil domains.</text>
</comment>
<comment type="mass spectrometry" mass="257406.0" method="MALDI" evidence="8"/>
<protein>
    <recommendedName>
        <fullName evidence="2">Golgin subfamily A member 4</fullName>
    </recommendedName>
</protein>
<reference key="1">
    <citation type="journal article" date="2004" name="Nature">
        <title>Genome sequence of the Brown Norway rat yields insights into mammalian evolution.</title>
        <authorList>
            <person name="Gibbs R.A."/>
            <person name="Weinstock G.M."/>
            <person name="Metzker M.L."/>
            <person name="Muzny D.M."/>
            <person name="Sodergren E.J."/>
            <person name="Scherer S."/>
            <person name="Scott G."/>
            <person name="Steffen D."/>
            <person name="Worley K.C."/>
            <person name="Burch P.E."/>
            <person name="Okwuonu G."/>
            <person name="Hines S."/>
            <person name="Lewis L."/>
            <person name="Deramo C."/>
            <person name="Delgado O."/>
            <person name="Dugan-Rocha S."/>
            <person name="Miner G."/>
            <person name="Morgan M."/>
            <person name="Hawes A."/>
            <person name="Gill R."/>
            <person name="Holt R.A."/>
            <person name="Adams M.D."/>
            <person name="Amanatides P.G."/>
            <person name="Baden-Tillson H."/>
            <person name="Barnstead M."/>
            <person name="Chin S."/>
            <person name="Evans C.A."/>
            <person name="Ferriera S."/>
            <person name="Fosler C."/>
            <person name="Glodek A."/>
            <person name="Gu Z."/>
            <person name="Jennings D."/>
            <person name="Kraft C.L."/>
            <person name="Nguyen T."/>
            <person name="Pfannkoch C.M."/>
            <person name="Sitter C."/>
            <person name="Sutton G.G."/>
            <person name="Venter J.C."/>
            <person name="Woodage T."/>
            <person name="Smith D."/>
            <person name="Lee H.-M."/>
            <person name="Gustafson E."/>
            <person name="Cahill P."/>
            <person name="Kana A."/>
            <person name="Doucette-Stamm L."/>
            <person name="Weinstock K."/>
            <person name="Fechtel K."/>
            <person name="Weiss R.B."/>
            <person name="Dunn D.M."/>
            <person name="Green E.D."/>
            <person name="Blakesley R.W."/>
            <person name="Bouffard G.G."/>
            <person name="De Jong P.J."/>
            <person name="Osoegawa K."/>
            <person name="Zhu B."/>
            <person name="Marra M."/>
            <person name="Schein J."/>
            <person name="Bosdet I."/>
            <person name="Fjell C."/>
            <person name="Jones S."/>
            <person name="Krzywinski M."/>
            <person name="Mathewson C."/>
            <person name="Siddiqui A."/>
            <person name="Wye N."/>
            <person name="McPherson J."/>
            <person name="Zhao S."/>
            <person name="Fraser C.M."/>
            <person name="Shetty J."/>
            <person name="Shatsman S."/>
            <person name="Geer K."/>
            <person name="Chen Y."/>
            <person name="Abramzon S."/>
            <person name="Nierman W.C."/>
            <person name="Havlak P.H."/>
            <person name="Chen R."/>
            <person name="Durbin K.J."/>
            <person name="Egan A."/>
            <person name="Ren Y."/>
            <person name="Song X.-Z."/>
            <person name="Li B."/>
            <person name="Liu Y."/>
            <person name="Qin X."/>
            <person name="Cawley S."/>
            <person name="Cooney A.J."/>
            <person name="D'Souza L.M."/>
            <person name="Martin K."/>
            <person name="Wu J.Q."/>
            <person name="Gonzalez-Garay M.L."/>
            <person name="Jackson A.R."/>
            <person name="Kalafus K.J."/>
            <person name="McLeod M.P."/>
            <person name="Milosavljevic A."/>
            <person name="Virk D."/>
            <person name="Volkov A."/>
            <person name="Wheeler D.A."/>
            <person name="Zhang Z."/>
            <person name="Bailey J.A."/>
            <person name="Eichler E.E."/>
            <person name="Tuzun E."/>
            <person name="Birney E."/>
            <person name="Mongin E."/>
            <person name="Ureta-Vidal A."/>
            <person name="Woodwark C."/>
            <person name="Zdobnov E."/>
            <person name="Bork P."/>
            <person name="Suyama M."/>
            <person name="Torrents D."/>
            <person name="Alexandersson M."/>
            <person name="Trask B.J."/>
            <person name="Young J.M."/>
            <person name="Huang H."/>
            <person name="Wang H."/>
            <person name="Xing H."/>
            <person name="Daniels S."/>
            <person name="Gietzen D."/>
            <person name="Schmidt J."/>
            <person name="Stevens K."/>
            <person name="Vitt U."/>
            <person name="Wingrove J."/>
            <person name="Camara F."/>
            <person name="Mar Alba M."/>
            <person name="Abril J.F."/>
            <person name="Guigo R."/>
            <person name="Smit A."/>
            <person name="Dubchak I."/>
            <person name="Rubin E.M."/>
            <person name="Couronne O."/>
            <person name="Poliakov A."/>
            <person name="Huebner N."/>
            <person name="Ganten D."/>
            <person name="Goesele C."/>
            <person name="Hummel O."/>
            <person name="Kreitler T."/>
            <person name="Lee Y.-A."/>
            <person name="Monti J."/>
            <person name="Schulz H."/>
            <person name="Zimdahl H."/>
            <person name="Himmelbauer H."/>
            <person name="Lehrach H."/>
            <person name="Jacob H.J."/>
            <person name="Bromberg S."/>
            <person name="Gullings-Handley J."/>
            <person name="Jensen-Seaman M.I."/>
            <person name="Kwitek A.E."/>
            <person name="Lazar J."/>
            <person name="Pasko D."/>
            <person name="Tonellato P.J."/>
            <person name="Twigger S."/>
            <person name="Ponting C.P."/>
            <person name="Duarte J.M."/>
            <person name="Rice S."/>
            <person name="Goodstadt L."/>
            <person name="Beatson S.A."/>
            <person name="Emes R.D."/>
            <person name="Winter E.E."/>
            <person name="Webber C."/>
            <person name="Brandt P."/>
            <person name="Nyakatura G."/>
            <person name="Adetobi M."/>
            <person name="Chiaromonte F."/>
            <person name="Elnitski L."/>
            <person name="Eswara P."/>
            <person name="Hardison R.C."/>
            <person name="Hou M."/>
            <person name="Kolbe D."/>
            <person name="Makova K."/>
            <person name="Miller W."/>
            <person name="Nekrutenko A."/>
            <person name="Riemer C."/>
            <person name="Schwartz S."/>
            <person name="Taylor J."/>
            <person name="Yang S."/>
            <person name="Zhang Y."/>
            <person name="Lindpaintner K."/>
            <person name="Andrews T.D."/>
            <person name="Caccamo M."/>
            <person name="Clamp M."/>
            <person name="Clarke L."/>
            <person name="Curwen V."/>
            <person name="Durbin R.M."/>
            <person name="Eyras E."/>
            <person name="Searle S.M."/>
            <person name="Cooper G.M."/>
            <person name="Batzoglou S."/>
            <person name="Brudno M."/>
            <person name="Sidow A."/>
            <person name="Stone E.A."/>
            <person name="Payseur B.A."/>
            <person name="Bourque G."/>
            <person name="Lopez-Otin C."/>
            <person name="Puente X.S."/>
            <person name="Chakrabarti K."/>
            <person name="Chatterji S."/>
            <person name="Dewey C."/>
            <person name="Pachter L."/>
            <person name="Bray N."/>
            <person name="Yap V.B."/>
            <person name="Caspi A."/>
            <person name="Tesler G."/>
            <person name="Pevzner P.A."/>
            <person name="Haussler D."/>
            <person name="Roskin K.M."/>
            <person name="Baertsch R."/>
            <person name="Clawson H."/>
            <person name="Furey T.S."/>
            <person name="Hinrichs A.S."/>
            <person name="Karolchik D."/>
            <person name="Kent W.J."/>
            <person name="Rosenbloom K.R."/>
            <person name="Trumbower H."/>
            <person name="Weirauch M."/>
            <person name="Cooper D.N."/>
            <person name="Stenson P.D."/>
            <person name="Ma B."/>
            <person name="Brent M."/>
            <person name="Arumugam M."/>
            <person name="Shteynberg D."/>
            <person name="Copley R.R."/>
            <person name="Taylor M.S."/>
            <person name="Riethman H."/>
            <person name="Mudunuri U."/>
            <person name="Peterson J."/>
            <person name="Guyer M."/>
            <person name="Felsenfeld A."/>
            <person name="Old S."/>
            <person name="Mockrin S."/>
            <person name="Collins F.S."/>
        </authorList>
    </citation>
    <scope>NUCLEOTIDE SEQUENCE [LARGE SCALE GENOMIC DNA]</scope>
    <source>
        <strain>Brown Norway</strain>
    </source>
</reference>
<reference evidence="10" key="2">
    <citation type="journal article" date="2004" name="Genome Res.">
        <title>The status, quality, and expansion of the NIH full-length cDNA project: the Mammalian Gene Collection (MGC).</title>
        <authorList>
            <consortium name="The MGC Project Team"/>
        </authorList>
    </citation>
    <scope>NUCLEOTIDE SEQUENCE [LARGE SCALE MRNA] OF 1669-2259</scope>
    <source>
        <strain evidence="7">Brown Norway</strain>
        <tissue evidence="10">Lung</tissue>
    </source>
</reference>
<reference evidence="9" key="3">
    <citation type="journal article" date="2011" name="J. Androl.">
        <title>Differential proteomics leads to identification of domain specific epididymal sperm proteins.</title>
        <authorList>
            <person name="Suryawanshi A.R."/>
            <person name="Khan S.A."/>
            <person name="Gajbhiye R.K."/>
            <person name="Gurav M.Y."/>
            <person name="Khole V.V."/>
        </authorList>
    </citation>
    <scope>IDENTIFICATION BY MASS SPECTROMETRY</scope>
    <scope>TISSUE SPECIFICITY</scope>
    <scope>MASS SPECTROMETRY</scope>
    <source>
        <strain evidence="8">Holtzman</strain>
        <tissue evidence="8">Sperm</tissue>
    </source>
</reference>
<reference key="4">
    <citation type="journal article" date="2012" name="Nat. Commun.">
        <title>Quantitative maps of protein phosphorylation sites across 14 different rat organs and tissues.</title>
        <authorList>
            <person name="Lundby A."/>
            <person name="Secher A."/>
            <person name="Lage K."/>
            <person name="Nordsborg N.B."/>
            <person name="Dmytriyev A."/>
            <person name="Lundby C."/>
            <person name="Olsen J.V."/>
        </authorList>
    </citation>
    <scope>PHOSPHORYLATION [LARGE SCALE ANALYSIS] AT SER-104</scope>
    <scope>IDENTIFICATION BY MASS SPECTROMETRY [LARGE SCALE ANALYSIS]</scope>
</reference>
<gene>
    <name evidence="10 11" type="primary">Golga4</name>
</gene>